<name>TRPC_XANE5</name>
<protein>
    <recommendedName>
        <fullName evidence="1">Indole-3-glycerol phosphate synthase</fullName>
        <shortName evidence="1">IGPS</shortName>
        <ecNumber evidence="1">4.1.1.48</ecNumber>
    </recommendedName>
</protein>
<evidence type="ECO:0000255" key="1">
    <source>
        <dbReference type="HAMAP-Rule" id="MF_00134"/>
    </source>
</evidence>
<comment type="catalytic activity">
    <reaction evidence="1">
        <text>1-(2-carboxyphenylamino)-1-deoxy-D-ribulose 5-phosphate + H(+) = (1S,2R)-1-C-(indol-3-yl)glycerol 3-phosphate + CO2 + H2O</text>
        <dbReference type="Rhea" id="RHEA:23476"/>
        <dbReference type="ChEBI" id="CHEBI:15377"/>
        <dbReference type="ChEBI" id="CHEBI:15378"/>
        <dbReference type="ChEBI" id="CHEBI:16526"/>
        <dbReference type="ChEBI" id="CHEBI:58613"/>
        <dbReference type="ChEBI" id="CHEBI:58866"/>
        <dbReference type="EC" id="4.1.1.48"/>
    </reaction>
</comment>
<comment type="pathway">
    <text evidence="1">Amino-acid biosynthesis; L-tryptophan biosynthesis; L-tryptophan from chorismate: step 4/5.</text>
</comment>
<comment type="similarity">
    <text evidence="1">Belongs to the TrpC family.</text>
</comment>
<organism>
    <name type="scientific">Xanthomonas euvesicatoria pv. vesicatoria (strain 85-10)</name>
    <name type="common">Xanthomonas campestris pv. vesicatoria</name>
    <dbReference type="NCBI Taxonomy" id="316273"/>
    <lineage>
        <taxon>Bacteria</taxon>
        <taxon>Pseudomonadati</taxon>
        <taxon>Pseudomonadota</taxon>
        <taxon>Gammaproteobacteria</taxon>
        <taxon>Lysobacterales</taxon>
        <taxon>Lysobacteraceae</taxon>
        <taxon>Xanthomonas</taxon>
    </lineage>
</organism>
<gene>
    <name evidence="1" type="primary">trpC</name>
    <name type="ordered locus">XCV0517</name>
</gene>
<keyword id="KW-0028">Amino-acid biosynthesis</keyword>
<keyword id="KW-0057">Aromatic amino acid biosynthesis</keyword>
<keyword id="KW-0210">Decarboxylase</keyword>
<keyword id="KW-0456">Lyase</keyword>
<keyword id="KW-0822">Tryptophan biosynthesis</keyword>
<accession>Q3BYB5</accession>
<feature type="chain" id="PRO_1000018571" description="Indole-3-glycerol phosphate synthase">
    <location>
        <begin position="1"/>
        <end position="265"/>
    </location>
</feature>
<proteinExistence type="inferred from homology"/>
<dbReference type="EC" id="4.1.1.48" evidence="1"/>
<dbReference type="EMBL" id="AM039952">
    <property type="protein sequence ID" value="CAJ22148.1"/>
    <property type="molecule type" value="Genomic_DNA"/>
</dbReference>
<dbReference type="RefSeq" id="WP_011346178.1">
    <property type="nucleotide sequence ID" value="NZ_CP017190.1"/>
</dbReference>
<dbReference type="SMR" id="Q3BYB5"/>
<dbReference type="STRING" id="456327.BJD11_20290"/>
<dbReference type="KEGG" id="xcv:XCV0517"/>
<dbReference type="eggNOG" id="COG0134">
    <property type="taxonomic scope" value="Bacteria"/>
</dbReference>
<dbReference type="HOGENOM" id="CLU_034247_2_0_6"/>
<dbReference type="UniPathway" id="UPA00035">
    <property type="reaction ID" value="UER00043"/>
</dbReference>
<dbReference type="Proteomes" id="UP000007069">
    <property type="component" value="Chromosome"/>
</dbReference>
<dbReference type="GO" id="GO:0004425">
    <property type="term" value="F:indole-3-glycerol-phosphate synthase activity"/>
    <property type="evidence" value="ECO:0007669"/>
    <property type="project" value="UniProtKB-UniRule"/>
</dbReference>
<dbReference type="GO" id="GO:0004640">
    <property type="term" value="F:phosphoribosylanthranilate isomerase activity"/>
    <property type="evidence" value="ECO:0007669"/>
    <property type="project" value="TreeGrafter"/>
</dbReference>
<dbReference type="GO" id="GO:0000162">
    <property type="term" value="P:L-tryptophan biosynthetic process"/>
    <property type="evidence" value="ECO:0007669"/>
    <property type="project" value="UniProtKB-UniRule"/>
</dbReference>
<dbReference type="CDD" id="cd00331">
    <property type="entry name" value="IGPS"/>
    <property type="match status" value="1"/>
</dbReference>
<dbReference type="FunFam" id="3.20.20.70:FF:000024">
    <property type="entry name" value="Indole-3-glycerol phosphate synthase"/>
    <property type="match status" value="1"/>
</dbReference>
<dbReference type="Gene3D" id="3.20.20.70">
    <property type="entry name" value="Aldolase class I"/>
    <property type="match status" value="1"/>
</dbReference>
<dbReference type="HAMAP" id="MF_00134_B">
    <property type="entry name" value="IGPS_B"/>
    <property type="match status" value="1"/>
</dbReference>
<dbReference type="InterPro" id="IPR013785">
    <property type="entry name" value="Aldolase_TIM"/>
</dbReference>
<dbReference type="InterPro" id="IPR045186">
    <property type="entry name" value="Indole-3-glycerol_P_synth"/>
</dbReference>
<dbReference type="InterPro" id="IPR013798">
    <property type="entry name" value="Indole-3-glycerol_P_synth_dom"/>
</dbReference>
<dbReference type="InterPro" id="IPR001468">
    <property type="entry name" value="Indole-3-GlycerolPSynthase_CS"/>
</dbReference>
<dbReference type="InterPro" id="IPR011060">
    <property type="entry name" value="RibuloseP-bd_barrel"/>
</dbReference>
<dbReference type="NCBIfam" id="NF001370">
    <property type="entry name" value="PRK00278.1-2"/>
    <property type="match status" value="1"/>
</dbReference>
<dbReference type="NCBIfam" id="NF001373">
    <property type="entry name" value="PRK00278.1-6"/>
    <property type="match status" value="1"/>
</dbReference>
<dbReference type="NCBIfam" id="NF001377">
    <property type="entry name" value="PRK00278.2-4"/>
    <property type="match status" value="1"/>
</dbReference>
<dbReference type="PANTHER" id="PTHR22854:SF2">
    <property type="entry name" value="INDOLE-3-GLYCEROL-PHOSPHATE SYNTHASE"/>
    <property type="match status" value="1"/>
</dbReference>
<dbReference type="PANTHER" id="PTHR22854">
    <property type="entry name" value="TRYPTOPHAN BIOSYNTHESIS PROTEIN"/>
    <property type="match status" value="1"/>
</dbReference>
<dbReference type="Pfam" id="PF00218">
    <property type="entry name" value="IGPS"/>
    <property type="match status" value="1"/>
</dbReference>
<dbReference type="SUPFAM" id="SSF51366">
    <property type="entry name" value="Ribulose-phoshate binding barrel"/>
    <property type="match status" value="1"/>
</dbReference>
<dbReference type="PROSITE" id="PS00614">
    <property type="entry name" value="IGPS"/>
    <property type="match status" value="1"/>
</dbReference>
<reference key="1">
    <citation type="journal article" date="2005" name="J. Bacteriol.">
        <title>Insights into genome plasticity and pathogenicity of the plant pathogenic Bacterium Xanthomonas campestris pv. vesicatoria revealed by the complete genome sequence.</title>
        <authorList>
            <person name="Thieme F."/>
            <person name="Koebnik R."/>
            <person name="Bekel T."/>
            <person name="Berger C."/>
            <person name="Boch J."/>
            <person name="Buettner D."/>
            <person name="Caldana C."/>
            <person name="Gaigalat L."/>
            <person name="Goesmann A."/>
            <person name="Kay S."/>
            <person name="Kirchner O."/>
            <person name="Lanz C."/>
            <person name="Linke B."/>
            <person name="McHardy A.C."/>
            <person name="Meyer F."/>
            <person name="Mittenhuber G."/>
            <person name="Nies D.H."/>
            <person name="Niesbach-Kloesgen U."/>
            <person name="Patschkowski T."/>
            <person name="Rueckert C."/>
            <person name="Rupp O."/>
            <person name="Schneiker S."/>
            <person name="Schuster S.C."/>
            <person name="Vorhoelter F.J."/>
            <person name="Weber E."/>
            <person name="Puehler A."/>
            <person name="Bonas U."/>
            <person name="Bartels D."/>
            <person name="Kaiser O."/>
        </authorList>
    </citation>
    <scope>NUCLEOTIDE SEQUENCE [LARGE SCALE GENOMIC DNA]</scope>
    <source>
        <strain>85-10</strain>
    </source>
</reference>
<sequence>MSDILNTILARKADEVAERSARVPLAELIARSADLPLTRGFAAAMQASIAAGDPAVIAEVKKASPSKGVIRPDFQPADIAVSYEFGGATCLSVLTDVDFFQGSDAYLRQARDACTLPVLRKDFTVDPYQVYEARVLGADCILLIVSALEDAQLADLSGLAMQLGLDVLVEVHDIDELERAVQVPVPLIGINNRNLRTFEVTLQTTLDMRAAVPRDRVLVTESGIVTQADVQLMRSHDVNAFLVGETFMRAAEPGESLRQLFFAHD</sequence>